<evidence type="ECO:0000250" key="1"/>
<evidence type="ECO:0000256" key="2">
    <source>
        <dbReference type="SAM" id="MobiDB-lite"/>
    </source>
</evidence>
<evidence type="ECO:0000269" key="3">
    <source>
    </source>
</evidence>
<evidence type="ECO:0000269" key="4">
    <source>
    </source>
</evidence>
<evidence type="ECO:0000269" key="5">
    <source>
    </source>
</evidence>
<evidence type="ECO:0000269" key="6">
    <source>
    </source>
</evidence>
<evidence type="ECO:0000269" key="7">
    <source ref="1"/>
</evidence>
<evidence type="ECO:0000303" key="8">
    <source>
    </source>
</evidence>
<evidence type="ECO:0000305" key="9"/>
<name>PMS1_ARATH</name>
<organism>
    <name type="scientific">Arabidopsis thaliana</name>
    <name type="common">Mouse-ear cress</name>
    <dbReference type="NCBI Taxonomy" id="3702"/>
    <lineage>
        <taxon>Eukaryota</taxon>
        <taxon>Viridiplantae</taxon>
        <taxon>Streptophyta</taxon>
        <taxon>Embryophyta</taxon>
        <taxon>Tracheophyta</taxon>
        <taxon>Spermatophyta</taxon>
        <taxon>Magnoliopsida</taxon>
        <taxon>eudicotyledons</taxon>
        <taxon>Gunneridae</taxon>
        <taxon>Pentapetalae</taxon>
        <taxon>rosids</taxon>
        <taxon>malvids</taxon>
        <taxon>Brassicales</taxon>
        <taxon>Brassicaceae</taxon>
        <taxon>Camelineae</taxon>
        <taxon>Arabidopsis</taxon>
    </lineage>
</organism>
<sequence length="923" mass="102684">MQGDSSPSPTTTSSPLIRPINRNVIHRICSGQVILDLSSAVKELVENSLDAGATSIEINLRDYGEDYFQVIDNGCGISPTNFKVLALKHHTSKLEDFTDLLNLTTYGFRGEALSSLCALGNLTVETRTKNEPVATLLTFDHSGLLTAEKKTARQIGTTVTVRKLFSNLPVRSKEFKRNIRKEYGKLVSLLNAYALIAKGVRFVCSNTTGKNPKSVVLNTQGRGSLKDNIITVFGISTFTSLQPVSICVSEDCRVEGFLSKPGQGTGRNLADRQYFFINGRPVDMPKVSKLVNELYKDTSSRKYPVTILDFIVPGGACDLNVTPDKRKVFFSDETSVIGSLREGLNEIYSSSNASYIVNRFEENSEQPDKAGVSSFQKKSNLLSEGIVLDVSSKTRLGEAIEKENPSLREVEIDNSSPMEKFKFEIKACGTKKGEGSLSVHDVTHLDKTPSKGLPQLNVTEKVTDASKDLSSRSSFAQSTLNTFVTMGKRKHENISTILSETPVLRNQTSSYRVEKSKFEVRALASRCLVEGDQLDDMVISKEDMTPSERDSELGNRISPGTQADNVERHEREHEKPIRFEEPTSDNTLTKGDVERVSEDNPRCSQPLRSVATVLDSPAQSTGPKMFSTLEFSFQNLRTRRLERLSRLQSTGYVSKCMNTPQPKKCFAAATLELSQPDDEERKARALAAATSELERLFRKEDFRRMQVLGQFNLGFIIAKLERDLFIVDQHAADEKFNFEHLARSTVLNQQPLLQPLNLELSPEEEVTVLMHMDIIRENGFLLEENPSAPPGKHFRLRAIPYSKNITFGVEDLKDLISTLGDNHGECSVASSYKTSKTDSICPSRVRAMLASRACRSSVMIGDPLRKNEMQKIVEHLADLESPWNCPHGRPTMRHLVDLTTLLTLPDDDNVNDDDDDDATISLA</sequence>
<accession>Q941I6</accession>
<accession>O81287</accession>
<accession>Q8GY98</accession>
<comment type="function">
    <text evidence="3 4 6">Required for DNA mismatch repair (MMR), correcting base-base mismatches and insertion-deletion loops (IDLs) resulting from DNA replication, DNA damage or from recombination events between non-identical sequences during meiosis. Component of the MutLalpha heterodimer that forms a ternary complex with the MutS heterodimers, which initially recognize the DNA mismatches. This complex is thought to be responsible for directing the downstream MMR events, including strand discrimination, excision, and resynthesis. Plays a major role in maintaining the genetic stability of simple sequence repeats and in the repair of heteroduplex sites present in meiotic recombination intermediates. Does not seem to be required for homologous somatic recombination.</text>
</comment>
<comment type="subunit">
    <text>Heterodimer of MLH1 and PMS1, called MutLalpha, which is the major MMR MutL activity correcting base-base mismatches as well as IDLs. The heterodimer binds double strand DNA independently of a mismatch with positive cooperativity and has more than one DNA binding site. Forms a ternary complex with either the MSH2-MSH6 (MutSalpha) or the MSH2-MSH3 heterodimer (MutSbeta), which recognize and bind to mismatch DNA. Ternary complex formation is promoted by ATP binding.</text>
</comment>
<comment type="subcellular location">
    <subcellularLocation>
        <location evidence="1">Nucleus</location>
    </subcellularLocation>
</comment>
<comment type="alternative products">
    <event type="alternative splicing"/>
    <isoform>
        <id>Q941I6-1</id>
        <name>1</name>
        <sequence type="displayed"/>
    </isoform>
    <isoform>
        <id>Q941I6-2</id>
        <name>2</name>
        <sequence type="described" ref="VSP_046044 VSP_046045 VSP_046046"/>
    </isoform>
</comment>
<comment type="tissue specificity">
    <text evidence="5 7">Expressed at very low levels in mature leaves. Detected in rapidly dividing tissues.</text>
</comment>
<comment type="disruption phenotype">
    <text evidence="4">Reduced fertility. Increased homeologous recombination frequency.</text>
</comment>
<comment type="miscellaneous">
    <molecule>Isoform 2</molecule>
    <text evidence="9">May be due to a competing acceptor splice site and an intron retention.</text>
</comment>
<comment type="similarity">
    <text evidence="9">Belongs to the DNA mismatch repair MutL/HexB family.</text>
</comment>
<comment type="sequence caution" evidence="9">
    <conflict type="erroneous gene model prediction">
        <sequence resource="EMBL-CDS" id="AAC19275"/>
    </conflict>
</comment>
<comment type="sequence caution" evidence="9">
    <conflict type="erroneous gene model prediction">
        <sequence resource="EMBL-CDS" id="CAB80739"/>
    </conflict>
</comment>
<reference key="1">
    <citation type="journal article" date="2004" name="Plant Sci.">
        <title>Structure and expression of AtPMS1, the Arabidopsis ortholog of the yeast DNA repair gene PMS1.</title>
        <authorList>
            <person name="Alou A.H."/>
            <person name="Jean M."/>
            <person name="Domingue O."/>
            <person name="Belzile F.J."/>
        </authorList>
        <dbReference type="AGRICOLA" id="IND43639031"/>
    </citation>
    <scope>NUCLEOTIDE SEQUENCE [MRNA] (ISOFORM 1)</scope>
    <scope>TISSUE SPECIFICITY</scope>
    <scope>ALTERNATIVE SPLICING</scope>
</reference>
<reference key="2">
    <citation type="journal article" date="1999" name="Nature">
        <title>Sequence and analysis of chromosome 4 of the plant Arabidopsis thaliana.</title>
        <authorList>
            <person name="Mayer K.F.X."/>
            <person name="Schueller C."/>
            <person name="Wambutt R."/>
            <person name="Murphy G."/>
            <person name="Volckaert G."/>
            <person name="Pohl T."/>
            <person name="Duesterhoeft A."/>
            <person name="Stiekema W."/>
            <person name="Entian K.-D."/>
            <person name="Terryn N."/>
            <person name="Harris B."/>
            <person name="Ansorge W."/>
            <person name="Brandt P."/>
            <person name="Grivell L.A."/>
            <person name="Rieger M."/>
            <person name="Weichselgartner M."/>
            <person name="de Simone V."/>
            <person name="Obermaier B."/>
            <person name="Mache R."/>
            <person name="Mueller M."/>
            <person name="Kreis M."/>
            <person name="Delseny M."/>
            <person name="Puigdomenech P."/>
            <person name="Watson M."/>
            <person name="Schmidtheini T."/>
            <person name="Reichert B."/>
            <person name="Portetelle D."/>
            <person name="Perez-Alonso M."/>
            <person name="Boutry M."/>
            <person name="Bancroft I."/>
            <person name="Vos P."/>
            <person name="Hoheisel J."/>
            <person name="Zimmermann W."/>
            <person name="Wedler H."/>
            <person name="Ridley P."/>
            <person name="Langham S.-A."/>
            <person name="McCullagh B."/>
            <person name="Bilham L."/>
            <person name="Robben J."/>
            <person name="van der Schueren J."/>
            <person name="Grymonprez B."/>
            <person name="Chuang Y.-J."/>
            <person name="Vandenbussche F."/>
            <person name="Braeken M."/>
            <person name="Weltjens I."/>
            <person name="Voet M."/>
            <person name="Bastiaens I."/>
            <person name="Aert R."/>
            <person name="Defoor E."/>
            <person name="Weitzenegger T."/>
            <person name="Bothe G."/>
            <person name="Ramsperger U."/>
            <person name="Hilbert H."/>
            <person name="Braun M."/>
            <person name="Holzer E."/>
            <person name="Brandt A."/>
            <person name="Peters S."/>
            <person name="van Staveren M."/>
            <person name="Dirkse W."/>
            <person name="Mooijman P."/>
            <person name="Klein Lankhorst R."/>
            <person name="Rose M."/>
            <person name="Hauf J."/>
            <person name="Koetter P."/>
            <person name="Berneiser S."/>
            <person name="Hempel S."/>
            <person name="Feldpausch M."/>
            <person name="Lamberth S."/>
            <person name="Van den Daele H."/>
            <person name="De Keyser A."/>
            <person name="Buysshaert C."/>
            <person name="Gielen J."/>
            <person name="Villarroel R."/>
            <person name="De Clercq R."/>
            <person name="van Montagu M."/>
            <person name="Rogers J."/>
            <person name="Cronin A."/>
            <person name="Quail M.A."/>
            <person name="Bray-Allen S."/>
            <person name="Clark L."/>
            <person name="Doggett J."/>
            <person name="Hall S."/>
            <person name="Kay M."/>
            <person name="Lennard N."/>
            <person name="McLay K."/>
            <person name="Mayes R."/>
            <person name="Pettett A."/>
            <person name="Rajandream M.A."/>
            <person name="Lyne M."/>
            <person name="Benes V."/>
            <person name="Rechmann S."/>
            <person name="Borkova D."/>
            <person name="Bloecker H."/>
            <person name="Scharfe M."/>
            <person name="Grimm M."/>
            <person name="Loehnert T.-H."/>
            <person name="Dose S."/>
            <person name="de Haan M."/>
            <person name="Maarse A.C."/>
            <person name="Schaefer M."/>
            <person name="Mueller-Auer S."/>
            <person name="Gabel C."/>
            <person name="Fuchs M."/>
            <person name="Fartmann B."/>
            <person name="Granderath K."/>
            <person name="Dauner D."/>
            <person name="Herzl A."/>
            <person name="Neumann S."/>
            <person name="Argiriou A."/>
            <person name="Vitale D."/>
            <person name="Liguori R."/>
            <person name="Piravandi E."/>
            <person name="Massenet O."/>
            <person name="Quigley F."/>
            <person name="Clabauld G."/>
            <person name="Muendlein A."/>
            <person name="Felber R."/>
            <person name="Schnabl S."/>
            <person name="Hiller R."/>
            <person name="Schmidt W."/>
            <person name="Lecharny A."/>
            <person name="Aubourg S."/>
            <person name="Chefdor F."/>
            <person name="Cooke R."/>
            <person name="Berger C."/>
            <person name="Monfort A."/>
            <person name="Casacuberta E."/>
            <person name="Gibbons T."/>
            <person name="Weber N."/>
            <person name="Vandenbol M."/>
            <person name="Bargues M."/>
            <person name="Terol J."/>
            <person name="Torres A."/>
            <person name="Perez-Perez A."/>
            <person name="Purnelle B."/>
            <person name="Bent E."/>
            <person name="Johnson S."/>
            <person name="Tacon D."/>
            <person name="Jesse T."/>
            <person name="Heijnen L."/>
            <person name="Schwarz S."/>
            <person name="Scholler P."/>
            <person name="Heber S."/>
            <person name="Francs P."/>
            <person name="Bielke C."/>
            <person name="Frishman D."/>
            <person name="Haase D."/>
            <person name="Lemcke K."/>
            <person name="Mewes H.-W."/>
            <person name="Stocker S."/>
            <person name="Zaccaria P."/>
            <person name="Bevan M."/>
            <person name="Wilson R.K."/>
            <person name="de la Bastide M."/>
            <person name="Habermann K."/>
            <person name="Parnell L."/>
            <person name="Dedhia N."/>
            <person name="Gnoj L."/>
            <person name="Schutz K."/>
            <person name="Huang E."/>
            <person name="Spiegel L."/>
            <person name="Sekhon M."/>
            <person name="Murray J."/>
            <person name="Sheet P."/>
            <person name="Cordes M."/>
            <person name="Abu-Threideh J."/>
            <person name="Stoneking T."/>
            <person name="Kalicki J."/>
            <person name="Graves T."/>
            <person name="Harmon G."/>
            <person name="Edwards J."/>
            <person name="Latreille P."/>
            <person name="Courtney L."/>
            <person name="Cloud J."/>
            <person name="Abbott A."/>
            <person name="Scott K."/>
            <person name="Johnson D."/>
            <person name="Minx P."/>
            <person name="Bentley D."/>
            <person name="Fulton B."/>
            <person name="Miller N."/>
            <person name="Greco T."/>
            <person name="Kemp K."/>
            <person name="Kramer J."/>
            <person name="Fulton L."/>
            <person name="Mardis E."/>
            <person name="Dante M."/>
            <person name="Pepin K."/>
            <person name="Hillier L.W."/>
            <person name="Nelson J."/>
            <person name="Spieth J."/>
            <person name="Ryan E."/>
            <person name="Andrews S."/>
            <person name="Geisel C."/>
            <person name="Layman D."/>
            <person name="Du H."/>
            <person name="Ali J."/>
            <person name="Berghoff A."/>
            <person name="Jones K."/>
            <person name="Drone K."/>
            <person name="Cotton M."/>
            <person name="Joshu C."/>
            <person name="Antonoiu B."/>
            <person name="Zidanic M."/>
            <person name="Strong C."/>
            <person name="Sun H."/>
            <person name="Lamar B."/>
            <person name="Yordan C."/>
            <person name="Ma P."/>
            <person name="Zhong J."/>
            <person name="Preston R."/>
            <person name="Vil D."/>
            <person name="Shekher M."/>
            <person name="Matero A."/>
            <person name="Shah R."/>
            <person name="Swaby I.K."/>
            <person name="O'Shaughnessy A."/>
            <person name="Rodriguez M."/>
            <person name="Hoffman J."/>
            <person name="Till S."/>
            <person name="Granat S."/>
            <person name="Shohdy N."/>
            <person name="Hasegawa A."/>
            <person name="Hameed A."/>
            <person name="Lodhi M."/>
            <person name="Johnson A."/>
            <person name="Chen E."/>
            <person name="Marra M.A."/>
            <person name="Martienssen R."/>
            <person name="McCombie W.R."/>
        </authorList>
    </citation>
    <scope>NUCLEOTIDE SEQUENCE [LARGE SCALE GENOMIC DNA]</scope>
    <source>
        <strain>cv. Columbia</strain>
    </source>
</reference>
<reference key="3">
    <citation type="journal article" date="2017" name="Plant J.">
        <title>Araport11: a complete reannotation of the Arabidopsis thaliana reference genome.</title>
        <authorList>
            <person name="Cheng C.Y."/>
            <person name="Krishnakumar V."/>
            <person name="Chan A.P."/>
            <person name="Thibaud-Nissen F."/>
            <person name="Schobel S."/>
            <person name="Town C.D."/>
        </authorList>
    </citation>
    <scope>GENOME REANNOTATION</scope>
    <source>
        <strain>cv. Columbia</strain>
    </source>
</reference>
<reference key="4">
    <citation type="journal article" date="2002" name="Science">
        <title>Functional annotation of a full-length Arabidopsis cDNA collection.</title>
        <authorList>
            <person name="Seki M."/>
            <person name="Narusaka M."/>
            <person name="Kamiya A."/>
            <person name="Ishida J."/>
            <person name="Satou M."/>
            <person name="Sakurai T."/>
            <person name="Nakajima M."/>
            <person name="Enju A."/>
            <person name="Akiyama K."/>
            <person name="Oono Y."/>
            <person name="Muramatsu M."/>
            <person name="Hayashizaki Y."/>
            <person name="Kawai J."/>
            <person name="Carninci P."/>
            <person name="Itoh M."/>
            <person name="Ishii Y."/>
            <person name="Arakawa T."/>
            <person name="Shibata K."/>
            <person name="Shinagawa A."/>
            <person name="Shinozaki K."/>
        </authorList>
    </citation>
    <scope>NUCLEOTIDE SEQUENCE [LARGE SCALE MRNA] (ISOFORM 2)</scope>
    <source>
        <strain>cv. Columbia</strain>
    </source>
</reference>
<reference key="5">
    <citation type="journal article" date="2004" name="Plant Mol. Biol.">
        <title>Involvement of the Arabidopsis thaliana AtPMS1 gene in somatic repeat instability.</title>
        <authorList>
            <person name="Alou A.H."/>
            <person name="Azaiez A."/>
            <person name="Jean M."/>
            <person name="Belzile F.J."/>
        </authorList>
    </citation>
    <scope>MUTAGENESIS OF 108-PHE-ARG-109</scope>
    <scope>FUNCTION</scope>
</reference>
<reference key="6">
    <citation type="journal article" date="2009" name="Plant Mol. Biol.">
        <title>The Arabidopsis DNA mismatch repair gene PMS1 restricts somatic recombination between homeologous sequences.</title>
        <authorList>
            <person name="Li L."/>
            <person name="Dion E."/>
            <person name="Richard G."/>
            <person name="Domingue O."/>
            <person name="Jean M."/>
            <person name="Belzile F.J."/>
        </authorList>
    </citation>
    <scope>FUNCTION</scope>
    <scope>DISRUPTION PHENOTYPE</scope>
</reference>
<reference key="7">
    <citation type="journal article" date="2011" name="Mol. Biol. Rep.">
        <title>PMS1 from Arabidopsis thaliana: optimization of protein overexpression in Escherichia coli.</title>
        <authorList>
            <person name="Galles C."/>
            <person name="Gomez R.L."/>
            <person name="Spampinato C.P."/>
        </authorList>
    </citation>
    <scope>TISSUE SPECIFICITY</scope>
</reference>
<reference key="8">
    <citation type="journal article" date="2013" name="Mol. Biol. Rep.">
        <title>Yeast mutator phenotype enforced by Arabidopsis PMS1 expression.</title>
        <authorList>
            <person name="Galles C."/>
            <person name="Spampinato C.P."/>
        </authorList>
    </citation>
    <scope>FUNCTION</scope>
</reference>
<keyword id="KW-0025">Alternative splicing</keyword>
<keyword id="KW-0227">DNA damage</keyword>
<keyword id="KW-0234">DNA repair</keyword>
<keyword id="KW-0539">Nucleus</keyword>
<keyword id="KW-1185">Reference proteome</keyword>
<gene>
    <name type="primary">PMS1</name>
    <name type="ordered locus">At4g02460</name>
    <name type="ORF">T14P8.6</name>
</gene>
<feature type="chain" id="PRO_0000421835" description="DNA mismatch repair protein PMS1">
    <location>
        <begin position="1"/>
        <end position="923"/>
    </location>
</feature>
<feature type="region of interest" description="Disordered" evidence="2">
    <location>
        <begin position="543"/>
        <end position="603"/>
    </location>
</feature>
<feature type="compositionally biased region" description="Basic and acidic residues" evidence="2">
    <location>
        <begin position="543"/>
        <end position="553"/>
    </location>
</feature>
<feature type="compositionally biased region" description="Basic and acidic residues" evidence="2">
    <location>
        <begin position="565"/>
        <end position="581"/>
    </location>
</feature>
<feature type="compositionally biased region" description="Basic and acidic residues" evidence="2">
    <location>
        <begin position="591"/>
        <end position="601"/>
    </location>
</feature>
<feature type="splice variant" id="VSP_046044" description="In isoform 2." evidence="8">
    <location>
        <position position="288"/>
    </location>
</feature>
<feature type="splice variant" id="VSP_046045" description="In isoform 2." evidence="8">
    <original>HAADE</original>
    <variation>SSSLV</variation>
    <location>
        <begin position="730"/>
        <end position="734"/>
    </location>
</feature>
<feature type="splice variant" id="VSP_046046" description="In isoform 2." evidence="8">
    <location>
        <begin position="735"/>
        <end position="923"/>
    </location>
</feature>
<feature type="mutagenesis site" description="Defective in MMR activity. Increase in microsatellite instability." evidence="3">
    <original>FR</original>
    <variation>AF</variation>
    <location>
        <begin position="108"/>
        <end position="109"/>
    </location>
</feature>
<proteinExistence type="evidence at protein level"/>
<dbReference type="EMBL" id="AY047228">
    <property type="protein sequence ID" value="AAL01156.1"/>
    <property type="molecule type" value="mRNA"/>
</dbReference>
<dbReference type="EMBL" id="AF069298">
    <property type="protein sequence ID" value="AAC19275.1"/>
    <property type="status" value="ALT_SEQ"/>
    <property type="molecule type" value="Genomic_DNA"/>
</dbReference>
<dbReference type="EMBL" id="AL161494">
    <property type="protein sequence ID" value="CAB80739.1"/>
    <property type="status" value="ALT_SEQ"/>
    <property type="molecule type" value="Genomic_DNA"/>
</dbReference>
<dbReference type="EMBL" id="CP002687">
    <property type="protein sequence ID" value="AEE82175.1"/>
    <property type="molecule type" value="Genomic_DNA"/>
</dbReference>
<dbReference type="EMBL" id="AK117777">
    <property type="protein sequence ID" value="BAC42424.1"/>
    <property type="molecule type" value="mRNA"/>
</dbReference>
<dbReference type="PIR" id="T01304">
    <property type="entry name" value="T01304"/>
</dbReference>
<dbReference type="RefSeq" id="NP_567236.1">
    <molecule id="Q941I6-1"/>
    <property type="nucleotide sequence ID" value="NM_116479.4"/>
</dbReference>
<dbReference type="SMR" id="Q941I6"/>
<dbReference type="FunCoup" id="Q941I6">
    <property type="interactions" value="3650"/>
</dbReference>
<dbReference type="STRING" id="3702.Q941I6"/>
<dbReference type="iPTMnet" id="Q941I6"/>
<dbReference type="PaxDb" id="3702-AT4G02460.1"/>
<dbReference type="ProteomicsDB" id="226211">
    <molecule id="Q941I6-1"/>
</dbReference>
<dbReference type="EnsemblPlants" id="AT4G02460.1">
    <molecule id="Q941I6-1"/>
    <property type="protein sequence ID" value="AT4G02460.1"/>
    <property type="gene ID" value="AT4G02460"/>
</dbReference>
<dbReference type="GeneID" id="827997"/>
<dbReference type="Gramene" id="AT4G02460.1">
    <molecule id="Q941I6-1"/>
    <property type="protein sequence ID" value="AT4G02460.1"/>
    <property type="gene ID" value="AT4G02460"/>
</dbReference>
<dbReference type="KEGG" id="ath:AT4G02460"/>
<dbReference type="Araport" id="AT4G02460"/>
<dbReference type="TAIR" id="AT4G02460">
    <property type="gene designation" value="PMS1"/>
</dbReference>
<dbReference type="eggNOG" id="KOG1978">
    <property type="taxonomic scope" value="Eukaryota"/>
</dbReference>
<dbReference type="HOGENOM" id="CLU_004131_0_2_1"/>
<dbReference type="InParanoid" id="Q941I6"/>
<dbReference type="OMA" id="MRPRRMP"/>
<dbReference type="PhylomeDB" id="Q941I6"/>
<dbReference type="PRO" id="PR:Q941I6"/>
<dbReference type="Proteomes" id="UP000006548">
    <property type="component" value="Chromosome 4"/>
</dbReference>
<dbReference type="ExpressionAtlas" id="Q941I6">
    <property type="expression patterns" value="baseline and differential"/>
</dbReference>
<dbReference type="GO" id="GO:0032300">
    <property type="term" value="C:mismatch repair complex"/>
    <property type="evidence" value="ECO:0007669"/>
    <property type="project" value="InterPro"/>
</dbReference>
<dbReference type="GO" id="GO:0005634">
    <property type="term" value="C:nucleus"/>
    <property type="evidence" value="ECO:0000305"/>
    <property type="project" value="TAIR"/>
</dbReference>
<dbReference type="GO" id="GO:0005524">
    <property type="term" value="F:ATP binding"/>
    <property type="evidence" value="ECO:0007669"/>
    <property type="project" value="InterPro"/>
</dbReference>
<dbReference type="GO" id="GO:0016887">
    <property type="term" value="F:ATP hydrolysis activity"/>
    <property type="evidence" value="ECO:0007669"/>
    <property type="project" value="InterPro"/>
</dbReference>
<dbReference type="GO" id="GO:0140664">
    <property type="term" value="F:ATP-dependent DNA damage sensor activity"/>
    <property type="evidence" value="ECO:0007669"/>
    <property type="project" value="InterPro"/>
</dbReference>
<dbReference type="GO" id="GO:0030983">
    <property type="term" value="F:mismatched DNA binding"/>
    <property type="evidence" value="ECO:0007669"/>
    <property type="project" value="InterPro"/>
</dbReference>
<dbReference type="GO" id="GO:0006310">
    <property type="term" value="P:DNA recombination"/>
    <property type="evidence" value="ECO:0000315"/>
    <property type="project" value="TAIR"/>
</dbReference>
<dbReference type="GO" id="GO:0010154">
    <property type="term" value="P:fruit development"/>
    <property type="evidence" value="ECO:0000315"/>
    <property type="project" value="TAIR"/>
</dbReference>
<dbReference type="GO" id="GO:0006298">
    <property type="term" value="P:mismatch repair"/>
    <property type="evidence" value="ECO:0000315"/>
    <property type="project" value="TAIR"/>
</dbReference>
<dbReference type="GO" id="GO:0009555">
    <property type="term" value="P:pollen development"/>
    <property type="evidence" value="ECO:0000315"/>
    <property type="project" value="TAIR"/>
</dbReference>
<dbReference type="GO" id="GO:0048316">
    <property type="term" value="P:seed development"/>
    <property type="evidence" value="ECO:0000315"/>
    <property type="project" value="TAIR"/>
</dbReference>
<dbReference type="CDD" id="cd16926">
    <property type="entry name" value="HATPase_MutL-MLH-PMS-like"/>
    <property type="match status" value="1"/>
</dbReference>
<dbReference type="CDD" id="cd03484">
    <property type="entry name" value="MutL_Trans_hPMS_2_like"/>
    <property type="match status" value="1"/>
</dbReference>
<dbReference type="FunFam" id="3.30.230.10:FF:000054">
    <property type="entry name" value="DNA mismatch repair protein PMS1"/>
    <property type="match status" value="1"/>
</dbReference>
<dbReference type="FunFam" id="3.30.1370.100:FF:000001">
    <property type="entry name" value="Mismatch repair endonuclease pms1, putative"/>
    <property type="match status" value="1"/>
</dbReference>
<dbReference type="FunFam" id="3.30.565.10:FF:000014">
    <property type="entry name" value="Mismatch repair endonuclease pms1, putative"/>
    <property type="match status" value="1"/>
</dbReference>
<dbReference type="Gene3D" id="3.30.230.10">
    <property type="match status" value="1"/>
</dbReference>
<dbReference type="Gene3D" id="3.30.565.10">
    <property type="entry name" value="Histidine kinase-like ATPase, C-terminal domain"/>
    <property type="match status" value="1"/>
</dbReference>
<dbReference type="Gene3D" id="3.30.1540.20">
    <property type="entry name" value="MutL, C-terminal domain, dimerisation subdomain"/>
    <property type="match status" value="1"/>
</dbReference>
<dbReference type="Gene3D" id="3.30.1370.100">
    <property type="entry name" value="MutL, C-terminal domain, regulatory subdomain"/>
    <property type="match status" value="1"/>
</dbReference>
<dbReference type="InterPro" id="IPR014762">
    <property type="entry name" value="DNA_mismatch_repair_CS"/>
</dbReference>
<dbReference type="InterPro" id="IPR013507">
    <property type="entry name" value="DNA_mismatch_S5_2-like"/>
</dbReference>
<dbReference type="InterPro" id="IPR036890">
    <property type="entry name" value="HATPase_C_sf"/>
</dbReference>
<dbReference type="InterPro" id="IPR002099">
    <property type="entry name" value="MutL/Mlh/PMS"/>
</dbReference>
<dbReference type="InterPro" id="IPR038973">
    <property type="entry name" value="MutL/Mlh/Pms-like"/>
</dbReference>
<dbReference type="InterPro" id="IPR014790">
    <property type="entry name" value="MutL_C"/>
</dbReference>
<dbReference type="InterPro" id="IPR042120">
    <property type="entry name" value="MutL_C_dimsub"/>
</dbReference>
<dbReference type="InterPro" id="IPR042121">
    <property type="entry name" value="MutL_C_regsub"/>
</dbReference>
<dbReference type="InterPro" id="IPR037198">
    <property type="entry name" value="MutL_C_sf"/>
</dbReference>
<dbReference type="InterPro" id="IPR020568">
    <property type="entry name" value="Ribosomal_Su5_D2-typ_SF"/>
</dbReference>
<dbReference type="InterPro" id="IPR014721">
    <property type="entry name" value="Ribsml_uS5_D2-typ_fold_subgr"/>
</dbReference>
<dbReference type="NCBIfam" id="TIGR00585">
    <property type="entry name" value="mutl"/>
    <property type="match status" value="1"/>
</dbReference>
<dbReference type="PANTHER" id="PTHR10073">
    <property type="entry name" value="DNA MISMATCH REPAIR PROTEIN MLH, PMS, MUTL"/>
    <property type="match status" value="1"/>
</dbReference>
<dbReference type="PANTHER" id="PTHR10073:SF52">
    <property type="entry name" value="MISMATCH REPAIR ENDONUCLEASE PMS2"/>
    <property type="match status" value="1"/>
</dbReference>
<dbReference type="Pfam" id="PF01119">
    <property type="entry name" value="DNA_mis_repair"/>
    <property type="match status" value="1"/>
</dbReference>
<dbReference type="Pfam" id="PF13589">
    <property type="entry name" value="HATPase_c_3"/>
    <property type="match status" value="1"/>
</dbReference>
<dbReference type="Pfam" id="PF08676">
    <property type="entry name" value="MutL_C"/>
    <property type="match status" value="1"/>
</dbReference>
<dbReference type="SMART" id="SM01340">
    <property type="entry name" value="DNA_mis_repair"/>
    <property type="match status" value="1"/>
</dbReference>
<dbReference type="SMART" id="SM00853">
    <property type="entry name" value="MutL_C"/>
    <property type="match status" value="1"/>
</dbReference>
<dbReference type="SUPFAM" id="SSF55874">
    <property type="entry name" value="ATPase domain of HSP90 chaperone/DNA topoisomerase II/histidine kinase"/>
    <property type="match status" value="1"/>
</dbReference>
<dbReference type="SUPFAM" id="SSF118116">
    <property type="entry name" value="DNA mismatch repair protein MutL"/>
    <property type="match status" value="1"/>
</dbReference>
<dbReference type="SUPFAM" id="SSF54211">
    <property type="entry name" value="Ribosomal protein S5 domain 2-like"/>
    <property type="match status" value="1"/>
</dbReference>
<dbReference type="PROSITE" id="PS00058">
    <property type="entry name" value="DNA_MISMATCH_REPAIR_1"/>
    <property type="match status" value="1"/>
</dbReference>
<protein>
    <recommendedName>
        <fullName>DNA mismatch repair protein PMS1</fullName>
    </recommendedName>
    <alternativeName>
        <fullName>Postmeiotic segregation protein 1</fullName>
    </alternativeName>
    <alternativeName>
        <fullName>Protein POSTMEIOTIC SEGREGATION 1</fullName>
    </alternativeName>
</protein>